<comment type="function">
    <text evidence="1">Catalyzes the intramolecular cyclization of bicyclic chalcones into tricyclic (S)-flavanones. Responsible for the isomerization of 4,2',4',6'-tetrahydroxychalcone (also termed chalcone) into naringenin (By similarity).</text>
</comment>
<comment type="catalytic activity">
    <reaction>
        <text>a chalcone = a flavanone.</text>
        <dbReference type="EC" id="5.5.1.6"/>
    </reaction>
</comment>
<comment type="pathway">
    <text>Secondary metabolite biosynthesis; flavonoid biosynthesis.</text>
</comment>
<comment type="induction">
    <text evidence="2">Induced during a hypersensitive response (HR) mediated by P.syringae glycinea.</text>
</comment>
<comment type="miscellaneous">
    <text>Part of the biosynthetic pathway for all classes of flavonoids, a large class of secondary plant metabolites, many of which are brightly colored.</text>
</comment>
<comment type="similarity">
    <text evidence="3">Belongs to the chalcone isomerase family.</text>
</comment>
<name>CFI1_SOYBN</name>
<evidence type="ECO:0000250" key="1"/>
<evidence type="ECO:0000269" key="2">
    <source>
    </source>
</evidence>
<evidence type="ECO:0000305" key="3"/>
<gene>
    <name type="primary">CHI1</name>
</gene>
<organism>
    <name type="scientific">Glycine max</name>
    <name type="common">Soybean</name>
    <name type="synonym">Glycine hispida</name>
    <dbReference type="NCBI Taxonomy" id="3847"/>
    <lineage>
        <taxon>Eukaryota</taxon>
        <taxon>Viridiplantae</taxon>
        <taxon>Streptophyta</taxon>
        <taxon>Embryophyta</taxon>
        <taxon>Tracheophyta</taxon>
        <taxon>Spermatophyta</taxon>
        <taxon>Magnoliopsida</taxon>
        <taxon>eudicotyledons</taxon>
        <taxon>Gunneridae</taxon>
        <taxon>Pentapetalae</taxon>
        <taxon>rosids</taxon>
        <taxon>fabids</taxon>
        <taxon>Fabales</taxon>
        <taxon>Fabaceae</taxon>
        <taxon>Papilionoideae</taxon>
        <taxon>50 kb inversion clade</taxon>
        <taxon>NPAAA clade</taxon>
        <taxon>indigoferoid/millettioid clade</taxon>
        <taxon>Phaseoleae</taxon>
        <taxon>Glycine</taxon>
        <taxon>Glycine subgen. Soja</taxon>
    </lineage>
</organism>
<keyword id="KW-0284">Flavonoid biosynthesis</keyword>
<keyword id="KW-0413">Isomerase</keyword>
<keyword id="KW-1185">Reference proteome</keyword>
<dbReference type="EC" id="5.5.1.6"/>
<dbReference type="EMBL" id="AJ004902">
    <property type="protein sequence ID" value="CAA06202.1"/>
    <property type="molecule type" value="mRNA"/>
</dbReference>
<dbReference type="PIR" id="T07657">
    <property type="entry name" value="T07657"/>
</dbReference>
<dbReference type="SMR" id="O81980"/>
<dbReference type="STRING" id="3847.O81980"/>
<dbReference type="InParanoid" id="O81980"/>
<dbReference type="BRENDA" id="5.5.1.6">
    <property type="organism ID" value="2483"/>
</dbReference>
<dbReference type="UniPathway" id="UPA00154"/>
<dbReference type="Proteomes" id="UP000008827">
    <property type="component" value="Unplaced"/>
</dbReference>
<dbReference type="GO" id="GO:0045430">
    <property type="term" value="F:chalcone isomerase activity"/>
    <property type="evidence" value="ECO:0007669"/>
    <property type="project" value="UniProtKB-EC"/>
</dbReference>
<dbReference type="GO" id="GO:0009813">
    <property type="term" value="P:flavonoid biosynthetic process"/>
    <property type="evidence" value="ECO:0007669"/>
    <property type="project" value="UniProtKB-UniPathway"/>
</dbReference>
<dbReference type="Gene3D" id="1.10.890.20">
    <property type="match status" value="1"/>
</dbReference>
<dbReference type="Gene3D" id="3.50.70.10">
    <property type="match status" value="1"/>
</dbReference>
<dbReference type="InterPro" id="IPR044164">
    <property type="entry name" value="CFI"/>
</dbReference>
<dbReference type="InterPro" id="IPR016087">
    <property type="entry name" value="Chalcone_isomerase"/>
</dbReference>
<dbReference type="InterPro" id="IPR016088">
    <property type="entry name" value="Chalcone_isomerase_3-sand"/>
</dbReference>
<dbReference type="InterPro" id="IPR016089">
    <property type="entry name" value="Chalcone_isomerase_bundle_sf"/>
</dbReference>
<dbReference type="InterPro" id="IPR036298">
    <property type="entry name" value="Chalcone_isomerase_sf"/>
</dbReference>
<dbReference type="PANTHER" id="PTHR28039:SF10">
    <property type="entry name" value="CHALCONE--FLAVANONE ISOMERASE 1A"/>
    <property type="match status" value="1"/>
</dbReference>
<dbReference type="PANTHER" id="PTHR28039">
    <property type="entry name" value="CHALCONE--FLAVONONE ISOMERASE 1-RELATED"/>
    <property type="match status" value="1"/>
</dbReference>
<dbReference type="Pfam" id="PF02431">
    <property type="entry name" value="Chalcone"/>
    <property type="match status" value="1"/>
</dbReference>
<dbReference type="SUPFAM" id="SSF54626">
    <property type="entry name" value="Chalcone isomerase"/>
    <property type="match status" value="1"/>
</dbReference>
<reference key="1">
    <citation type="journal article" date="1998" name="Plant Mol. Biol.">
        <title>Cloning of genes by mRNA differential display induced during the hypersensitive reaction of soybean after inoculation with Pseudomonas syringae pv. glycinea.</title>
        <authorList>
            <person name="Seehaus K."/>
            <person name="Tenhaken R."/>
        </authorList>
    </citation>
    <scope>NUCLEOTIDE SEQUENCE [MRNA]</scope>
    <scope>INDUCTION</scope>
    <source>
        <strain>cv. Williams 82</strain>
    </source>
</reference>
<feature type="chain" id="PRO_0000166442" description="Chalcone--flavanone isomerase 1">
    <location>
        <begin position="1" status="less than"/>
        <end position="172"/>
    </location>
</feature>
<feature type="binding site" evidence="1">
    <location>
        <position position="2"/>
    </location>
    <ligand>
        <name>substrate</name>
    </ligand>
</feature>
<feature type="binding site" evidence="1">
    <location>
        <position position="67"/>
    </location>
    <ligand>
        <name>substrate</name>
    </ligand>
</feature>
<feature type="binding site" evidence="1">
    <location>
        <position position="144"/>
    </location>
    <ligand>
        <name>substrate</name>
    </ligand>
</feature>
<feature type="site" description="Important for catalytic activity" evidence="1">
    <location>
        <position position="60"/>
    </location>
</feature>
<feature type="non-terminal residue">
    <location>
        <position position="1"/>
    </location>
</feature>
<protein>
    <recommendedName>
        <fullName>Chalcone--flavanone isomerase 1</fullName>
        <shortName>Chalcone isomerase 1</shortName>
        <ecNumber>5.5.1.6</ecNumber>
    </recommendedName>
</protein>
<accession>O81980</accession>
<proteinExistence type="evidence at transcript level"/>
<sequence length="172" mass="18744">YTGIGVYLEDKAVPSLAAKWKGKTSEELVHTLHFYRDIISGPFEKLIRGSKILPLAGAEYSKKVMENCVAHMKSVGTYGDAEAAAIEKFAEAFKNVNFAPGPLFLYRQSPDGILGLSFSEDVTIPEKEAAVIENKAVSAAVLETMIGEHAVSPDLKRILASRLLRIEHGIIV</sequence>